<sequence>MTSKGPEEEHPSVTLFRQYLRIRTVQPKPDYGAAVAFFEERARQLGLGCQKVEVAPGYVVTVLTWPGTNPTLSSILLNSHTDVVPVFKEHWSHDPFEAFKDSEGYIYARGAQDMKCISIQYLEAVRRLKVEGHRFPRTIHMTFVPDEEVGGHQGMELFVQRPEFHALRAGFALDEGIANPTDAFTVFYSERSPWWVRVTSTGRPGHASRFMEDTAAEKLHKVVSSILAFREKEWQRLQSNPHLKEGSVTSVNLTKLEGGVAYNVIPATMSASFDFRVAPDVDFKAFEEQLQSWCQAAGEGVTLEFAQKWMHPQVTPTDDSNPWWAAFSRVCKDMKLTLEPEIMPAATDNRYIRAVGIPALGFSPMNRTPVLLHDHDERLHEAVFLRGVDIYTRLLPALASVPALPSES</sequence>
<keyword id="KW-0963">Cytoplasm</keyword>
<keyword id="KW-0378">Hydrolase</keyword>
<keyword id="KW-0479">Metal-binding</keyword>
<keyword id="KW-1185">Reference proteome</keyword>
<keyword id="KW-0862">Zinc</keyword>
<proteinExistence type="evidence at transcript level"/>
<organism>
    <name type="scientific">Pongo abelii</name>
    <name type="common">Sumatran orangutan</name>
    <name type="synonym">Pongo pygmaeus abelii</name>
    <dbReference type="NCBI Taxonomy" id="9601"/>
    <lineage>
        <taxon>Eukaryota</taxon>
        <taxon>Metazoa</taxon>
        <taxon>Chordata</taxon>
        <taxon>Craniata</taxon>
        <taxon>Vertebrata</taxon>
        <taxon>Euteleostomi</taxon>
        <taxon>Mammalia</taxon>
        <taxon>Eutheria</taxon>
        <taxon>Euarchontoglires</taxon>
        <taxon>Primates</taxon>
        <taxon>Haplorrhini</taxon>
        <taxon>Catarrhini</taxon>
        <taxon>Hominidae</taxon>
        <taxon>Pongo</taxon>
    </lineage>
</organism>
<feature type="chain" id="PRO_0000274008" description="Aminoacylase-1">
    <location>
        <begin position="1"/>
        <end position="408"/>
    </location>
</feature>
<feature type="active site" evidence="1">
    <location>
        <position position="82"/>
    </location>
</feature>
<feature type="active site" description="Proton acceptor" evidence="1">
    <location>
        <position position="147"/>
    </location>
</feature>
<feature type="binding site" evidence="2">
    <location>
        <position position="80"/>
    </location>
    <ligand>
        <name>Zn(2+)</name>
        <dbReference type="ChEBI" id="CHEBI:29105"/>
        <label>1</label>
    </ligand>
</feature>
<feature type="binding site" evidence="2">
    <location>
        <position position="113"/>
    </location>
    <ligand>
        <name>Zn(2+)</name>
        <dbReference type="ChEBI" id="CHEBI:29105"/>
        <label>1</label>
    </ligand>
</feature>
<feature type="binding site" evidence="2">
    <location>
        <position position="113"/>
    </location>
    <ligand>
        <name>Zn(2+)</name>
        <dbReference type="ChEBI" id="CHEBI:29105"/>
        <label>2</label>
    </ligand>
</feature>
<feature type="binding site" evidence="2">
    <location>
        <position position="148"/>
    </location>
    <ligand>
        <name>Zn(2+)</name>
        <dbReference type="ChEBI" id="CHEBI:29105"/>
        <label>2</label>
    </ligand>
</feature>
<feature type="binding site" evidence="2">
    <location>
        <position position="175"/>
    </location>
    <ligand>
        <name>Zn(2+)</name>
        <dbReference type="ChEBI" id="CHEBI:29105"/>
        <label>1</label>
    </ligand>
</feature>
<feature type="binding site" evidence="2">
    <location>
        <position position="373"/>
    </location>
    <ligand>
        <name>Zn(2+)</name>
        <dbReference type="ChEBI" id="CHEBI:29105"/>
        <label>2</label>
    </ligand>
</feature>
<protein>
    <recommendedName>
        <fullName>Aminoacylase-1</fullName>
        <shortName>ACY-1</shortName>
        <ecNumber evidence="3">3.5.1.14</ecNumber>
    </recommendedName>
    <alternativeName>
        <fullName>N-acyl-L-amino-acid amidohydrolase</fullName>
    </alternativeName>
</protein>
<dbReference type="EC" id="3.5.1.14" evidence="3"/>
<dbReference type="EMBL" id="CR857251">
    <property type="protein sequence ID" value="CAH89547.1"/>
    <property type="status" value="ALT_INIT"/>
    <property type="molecule type" value="mRNA"/>
</dbReference>
<dbReference type="RefSeq" id="NP_001124673.1">
    <property type="nucleotide sequence ID" value="NM_001131201.2"/>
</dbReference>
<dbReference type="RefSeq" id="XP_009237215.1">
    <property type="nucleotide sequence ID" value="XM_009238940.1"/>
</dbReference>
<dbReference type="SMR" id="Q5RFB0"/>
<dbReference type="FunCoup" id="Q5RFB0">
    <property type="interactions" value="360"/>
</dbReference>
<dbReference type="STRING" id="9601.ENSPPYP00000015464"/>
<dbReference type="MEROPS" id="M20.973"/>
<dbReference type="GeneID" id="100171519"/>
<dbReference type="KEGG" id="pon:100171519"/>
<dbReference type="CTD" id="95"/>
<dbReference type="eggNOG" id="KOG2275">
    <property type="taxonomic scope" value="Eukaryota"/>
</dbReference>
<dbReference type="InParanoid" id="Q5RFB0"/>
<dbReference type="OrthoDB" id="3064516at2759"/>
<dbReference type="Proteomes" id="UP000001595">
    <property type="component" value="Unplaced"/>
</dbReference>
<dbReference type="GO" id="GO:0005737">
    <property type="term" value="C:cytoplasm"/>
    <property type="evidence" value="ECO:0007669"/>
    <property type="project" value="UniProtKB-SubCell"/>
</dbReference>
<dbReference type="GO" id="GO:0004046">
    <property type="term" value="F:aminoacylase activity"/>
    <property type="evidence" value="ECO:0007669"/>
    <property type="project" value="UniProtKB-EC"/>
</dbReference>
<dbReference type="GO" id="GO:0046872">
    <property type="term" value="F:metal ion binding"/>
    <property type="evidence" value="ECO:0007669"/>
    <property type="project" value="UniProtKB-KW"/>
</dbReference>
<dbReference type="GO" id="GO:0006520">
    <property type="term" value="P:amino acid metabolic process"/>
    <property type="evidence" value="ECO:0007669"/>
    <property type="project" value="InterPro"/>
</dbReference>
<dbReference type="CDD" id="cd05646">
    <property type="entry name" value="M20_AcylaseI_like"/>
    <property type="match status" value="1"/>
</dbReference>
<dbReference type="FunFam" id="3.40.630.10:FF:000019">
    <property type="entry name" value="Aminoacylase 1"/>
    <property type="match status" value="1"/>
</dbReference>
<dbReference type="FunFam" id="1.10.150.900:FF:000001">
    <property type="entry name" value="Aminoacylase-1, putative"/>
    <property type="match status" value="1"/>
</dbReference>
<dbReference type="FunFam" id="3.30.70.360:FF:000005">
    <property type="entry name" value="Putative Aminoacylase-1"/>
    <property type="match status" value="1"/>
</dbReference>
<dbReference type="Gene3D" id="1.10.150.900">
    <property type="match status" value="1"/>
</dbReference>
<dbReference type="Gene3D" id="3.30.70.360">
    <property type="match status" value="1"/>
</dbReference>
<dbReference type="Gene3D" id="3.40.630.10">
    <property type="entry name" value="Zn peptidases"/>
    <property type="match status" value="1"/>
</dbReference>
<dbReference type="InterPro" id="IPR052083">
    <property type="entry name" value="Aminoacylase-1_M20A"/>
</dbReference>
<dbReference type="InterPro" id="IPR001261">
    <property type="entry name" value="ArgE/DapE_CS"/>
</dbReference>
<dbReference type="InterPro" id="IPR036264">
    <property type="entry name" value="Bact_exopeptidase_dim_dom"/>
</dbReference>
<dbReference type="InterPro" id="IPR010159">
    <property type="entry name" value="N-acyl_aa_amidohydrolase"/>
</dbReference>
<dbReference type="InterPro" id="IPR002933">
    <property type="entry name" value="Peptidase_M20"/>
</dbReference>
<dbReference type="InterPro" id="IPR011650">
    <property type="entry name" value="Peptidase_M20_dimer"/>
</dbReference>
<dbReference type="NCBIfam" id="TIGR01880">
    <property type="entry name" value="Ac-peptdase-euk"/>
    <property type="match status" value="1"/>
</dbReference>
<dbReference type="PANTHER" id="PTHR45892">
    <property type="entry name" value="AMINOACYLASE-1"/>
    <property type="match status" value="1"/>
</dbReference>
<dbReference type="PANTHER" id="PTHR45892:SF1">
    <property type="entry name" value="AMINOACYLASE-1"/>
    <property type="match status" value="1"/>
</dbReference>
<dbReference type="Pfam" id="PF07687">
    <property type="entry name" value="M20_dimer"/>
    <property type="match status" value="1"/>
</dbReference>
<dbReference type="Pfam" id="PF01546">
    <property type="entry name" value="Peptidase_M20"/>
    <property type="match status" value="1"/>
</dbReference>
<dbReference type="PIRSF" id="PIRSF036696">
    <property type="entry name" value="ACY-1"/>
    <property type="match status" value="1"/>
</dbReference>
<dbReference type="SUPFAM" id="SSF55031">
    <property type="entry name" value="Bacterial exopeptidase dimerisation domain"/>
    <property type="match status" value="1"/>
</dbReference>
<dbReference type="SUPFAM" id="SSF53187">
    <property type="entry name" value="Zn-dependent exopeptidases"/>
    <property type="match status" value="1"/>
</dbReference>
<dbReference type="PROSITE" id="PS00758">
    <property type="entry name" value="ARGE_DAPE_CPG2_1"/>
    <property type="match status" value="1"/>
</dbReference>
<dbReference type="PROSITE" id="PS00759">
    <property type="entry name" value="ARGE_DAPE_CPG2_2"/>
    <property type="match status" value="1"/>
</dbReference>
<name>ACY1_PONAB</name>
<comment type="function">
    <text evidence="3">Catalyzes the hydrolysis of N-acetylated amino acids to acetate and free amino acids.</text>
</comment>
<comment type="catalytic activity">
    <reaction evidence="3">
        <text>an N-acyl-L-amino acid + H2O = an L-alpha-amino acid + a carboxylate</text>
        <dbReference type="Rhea" id="RHEA:15565"/>
        <dbReference type="ChEBI" id="CHEBI:15377"/>
        <dbReference type="ChEBI" id="CHEBI:29067"/>
        <dbReference type="ChEBI" id="CHEBI:59869"/>
        <dbReference type="ChEBI" id="CHEBI:59874"/>
        <dbReference type="EC" id="3.5.1.14"/>
    </reaction>
    <physiologicalReaction direction="left-to-right" evidence="3">
        <dbReference type="Rhea" id="RHEA:15566"/>
    </physiologicalReaction>
</comment>
<comment type="catalytic activity">
    <reaction evidence="2">
        <text>N-acetyl-L-methionine + H2O = L-methionine + acetate</text>
        <dbReference type="Rhea" id="RHEA:67440"/>
        <dbReference type="ChEBI" id="CHEBI:15377"/>
        <dbReference type="ChEBI" id="CHEBI:30089"/>
        <dbReference type="ChEBI" id="CHEBI:57844"/>
        <dbReference type="ChEBI" id="CHEBI:71670"/>
    </reaction>
    <physiologicalReaction direction="left-to-right" evidence="2">
        <dbReference type="Rhea" id="RHEA:67441"/>
    </physiologicalReaction>
</comment>
<comment type="catalytic activity">
    <reaction evidence="3">
        <text>N-acetyl-L-glutamine + H2O = L-glutamine + acetate</text>
        <dbReference type="Rhea" id="RHEA:67368"/>
        <dbReference type="ChEBI" id="CHEBI:15377"/>
        <dbReference type="ChEBI" id="CHEBI:30089"/>
        <dbReference type="ChEBI" id="CHEBI:58359"/>
        <dbReference type="ChEBI" id="CHEBI:143879"/>
    </reaction>
    <physiologicalReaction direction="left-to-right" evidence="3">
        <dbReference type="Rhea" id="RHEA:67369"/>
    </physiologicalReaction>
</comment>
<comment type="cofactor">
    <cofactor evidence="2">
        <name>Zn(2+)</name>
        <dbReference type="ChEBI" id="CHEBI:29105"/>
    </cofactor>
    <text evidence="2">Binds 2 Zn(2+) ions per subunit.</text>
</comment>
<comment type="subunit">
    <text evidence="3">Homodimer (By similarity). Interacts with SPHK1 (By similarity).</text>
</comment>
<comment type="subcellular location">
    <subcellularLocation>
        <location evidence="1">Cytoplasm</location>
    </subcellularLocation>
</comment>
<comment type="similarity">
    <text evidence="4">Belongs to the peptidase M20A family.</text>
</comment>
<comment type="sequence caution" evidence="4">
    <conflict type="erroneous initiation">
        <sequence resource="EMBL-CDS" id="CAH89547"/>
    </conflict>
</comment>
<reference key="1">
    <citation type="submission" date="2004-11" db="EMBL/GenBank/DDBJ databases">
        <authorList>
            <consortium name="The German cDNA consortium"/>
        </authorList>
    </citation>
    <scope>NUCLEOTIDE SEQUENCE [LARGE SCALE MRNA]</scope>
    <source>
        <tissue>Kidney</tissue>
    </source>
</reference>
<gene>
    <name type="primary">ACY1</name>
</gene>
<evidence type="ECO:0000250" key="1"/>
<evidence type="ECO:0000250" key="2">
    <source>
        <dbReference type="UniProtKB" id="Q03154"/>
    </source>
</evidence>
<evidence type="ECO:0000250" key="3">
    <source>
        <dbReference type="UniProtKB" id="Q99JW2"/>
    </source>
</evidence>
<evidence type="ECO:0000305" key="4"/>
<accession>Q5RFB0</accession>